<sequence>MSTTIDIPESSKVVKGKGVVAAPLRPGGWKKGVAIMDFILRLGAIAAALGAAATMGTSDQTLPFFTQFFQFEASYDSFTTFQFFVITMALVGGYLVLSLPFSVVAIIRPHAVGPRLFLIILDTVFLTLATASAASAAAVVYLAHNGDQDTNWLAICNQFGDFCAQTSSAVVSSFVAVVVFVLLIVMSALAMGKP</sequence>
<comment type="function">
    <text evidence="1">Regulates membrane-cell wall junctions and localized cell wall deposition. Required for establishment of the Casparian strip membrane domain (CSD) and the subsequent formation of Casparian strips, a cell wall modification of the root endodermis that determines an apoplastic barrier between the intraorganismal apoplasm and the extraorganismal apoplasm and prevents lateral diffusion (By similarity).</text>
</comment>
<comment type="subunit">
    <text evidence="1">Homodimer and heterodimers.</text>
</comment>
<comment type="subcellular location">
    <subcellularLocation>
        <location evidence="1">Cell membrane</location>
        <topology evidence="1">Multi-pass membrane protein</topology>
    </subcellularLocation>
    <text evidence="1">Very restricted localization following a belt shape within the plasma membrane which coincides with the position of the Casparian strip membrane domain in the root endodermis.</text>
</comment>
<comment type="similarity">
    <text evidence="3">Belongs to the Casparian strip membrane proteins (CASP) family.</text>
</comment>
<organism>
    <name type="scientific">Vigna unguiculata</name>
    <name type="common">Cowpea</name>
    <dbReference type="NCBI Taxonomy" id="3917"/>
    <lineage>
        <taxon>Eukaryota</taxon>
        <taxon>Viridiplantae</taxon>
        <taxon>Streptophyta</taxon>
        <taxon>Embryophyta</taxon>
        <taxon>Tracheophyta</taxon>
        <taxon>Spermatophyta</taxon>
        <taxon>Magnoliopsida</taxon>
        <taxon>eudicotyledons</taxon>
        <taxon>Gunneridae</taxon>
        <taxon>Pentapetalae</taxon>
        <taxon>rosids</taxon>
        <taxon>fabids</taxon>
        <taxon>Fabales</taxon>
        <taxon>Fabaceae</taxon>
        <taxon>Papilionoideae</taxon>
        <taxon>50 kb inversion clade</taxon>
        <taxon>NPAAA clade</taxon>
        <taxon>indigoferoid/millettioid clade</taxon>
        <taxon>Phaseoleae</taxon>
        <taxon>Vigna</taxon>
    </lineage>
</organism>
<proteinExistence type="evidence at transcript level"/>
<feature type="chain" id="PRO_0000417814" description="Casparian strip membrane protein 2">
    <location>
        <begin position="1"/>
        <end position="194"/>
    </location>
</feature>
<feature type="topological domain" description="Cytoplasmic" evidence="2">
    <location>
        <begin position="1"/>
        <end position="32"/>
    </location>
</feature>
<feature type="transmembrane region" description="Helical" evidence="2">
    <location>
        <begin position="33"/>
        <end position="53"/>
    </location>
</feature>
<feature type="topological domain" description="Extracellular" evidence="2">
    <location>
        <begin position="54"/>
        <end position="82"/>
    </location>
</feature>
<feature type="transmembrane region" description="Helical" evidence="2">
    <location>
        <begin position="83"/>
        <end position="103"/>
    </location>
</feature>
<feature type="topological domain" description="Cytoplasmic" evidence="2">
    <location>
        <begin position="104"/>
        <end position="115"/>
    </location>
</feature>
<feature type="transmembrane region" description="Helical" evidence="2">
    <location>
        <begin position="116"/>
        <end position="136"/>
    </location>
</feature>
<feature type="topological domain" description="Extracellular" evidence="2">
    <location>
        <begin position="137"/>
        <end position="168"/>
    </location>
</feature>
<feature type="transmembrane region" description="Helical" evidence="2">
    <location>
        <begin position="169"/>
        <end position="189"/>
    </location>
</feature>
<feature type="topological domain" description="Cytoplasmic" evidence="2">
    <location>
        <begin position="190"/>
        <end position="194"/>
    </location>
</feature>
<evidence type="ECO:0000250" key="1"/>
<evidence type="ECO:0000255" key="2"/>
<evidence type="ECO:0000305" key="3"/>
<reference key="1">
    <citation type="submission" date="2008-06" db="EMBL/GenBank/DDBJ databases">
        <title>Development of cowpea UCR 707 mixed tissue and conditions ESTs.</title>
        <authorList>
            <person name="Close T.J."/>
            <person name="Fenton R.D."/>
            <person name="Ehlers J.D."/>
            <person name="Roberts P.A."/>
            <person name="Wanamaker S."/>
            <person name="Bristow J."/>
            <person name="Wang M."/>
            <person name="Lucas S."/>
            <person name="Lindquist E.A."/>
            <person name="Pennacchio C."/>
        </authorList>
    </citation>
    <scope>NUCLEOTIDE SEQUENCE [LARGE SCALE MRNA]</scope>
    <source>
        <strain>cv. UCR 707</strain>
        <tissue>Seedling</tissue>
    </source>
</reference>
<reference key="2">
    <citation type="journal article" date="2014" name="Plant Physiol.">
        <title>Functional and evolutionary analysis of the CASPARIAN STRIP MEMBRANE DOMAIN PROTEIN family.</title>
        <authorList>
            <person name="Roppolo D."/>
            <person name="Boeckmann B."/>
            <person name="Pfister A."/>
            <person name="Boutet E."/>
            <person name="Rubio M.C."/>
            <person name="Denervaud-Tendon V."/>
            <person name="Vermeer J.E."/>
            <person name="Gheyselinck J."/>
            <person name="Xenarios I."/>
            <person name="Geldner N."/>
        </authorList>
    </citation>
    <scope>GENE FAMILY</scope>
    <scope>NOMENCLATURE</scope>
</reference>
<accession>P0DI39</accession>
<keyword id="KW-1003">Cell membrane</keyword>
<keyword id="KW-0961">Cell wall biogenesis/degradation</keyword>
<keyword id="KW-0472">Membrane</keyword>
<keyword id="KW-0812">Transmembrane</keyword>
<keyword id="KW-1133">Transmembrane helix</keyword>
<protein>
    <recommendedName>
        <fullName>Casparian strip membrane protein 2</fullName>
        <shortName>VuCASP2</shortName>
    </recommendedName>
</protein>
<name>CASP2_VIGUN</name>
<dbReference type="EMBL" id="FG920036">
    <property type="status" value="NOT_ANNOTATED_CDS"/>
    <property type="molecule type" value="mRNA"/>
</dbReference>
<dbReference type="SMR" id="P0DI39"/>
<dbReference type="GO" id="GO:0005886">
    <property type="term" value="C:plasma membrane"/>
    <property type="evidence" value="ECO:0007669"/>
    <property type="project" value="UniProtKB-SubCell"/>
</dbReference>
<dbReference type="GO" id="GO:0071555">
    <property type="term" value="P:cell wall organization"/>
    <property type="evidence" value="ECO:0007669"/>
    <property type="project" value="UniProtKB-KW"/>
</dbReference>
<dbReference type="InterPro" id="IPR006459">
    <property type="entry name" value="CASP/CASPL"/>
</dbReference>
<dbReference type="InterPro" id="IPR006702">
    <property type="entry name" value="CASP_dom"/>
</dbReference>
<dbReference type="InterPro" id="IPR044173">
    <property type="entry name" value="CASPL"/>
</dbReference>
<dbReference type="NCBIfam" id="TIGR01569">
    <property type="entry name" value="A_tha_TIGR01569"/>
    <property type="match status" value="1"/>
</dbReference>
<dbReference type="PANTHER" id="PTHR36488:SF11">
    <property type="entry name" value="CASP-LIKE PROTEIN"/>
    <property type="match status" value="1"/>
</dbReference>
<dbReference type="PANTHER" id="PTHR36488">
    <property type="entry name" value="CASP-LIKE PROTEIN 1U1"/>
    <property type="match status" value="1"/>
</dbReference>
<dbReference type="Pfam" id="PF04535">
    <property type="entry name" value="CASP_dom"/>
    <property type="match status" value="1"/>
</dbReference>